<sequence length="60" mass="5992">MDPCECSKSGTCNCGGSCTCTNCSCTSCKKSCCPCCPSGCTKCASGCVCKGKTCDTSCCQ</sequence>
<comment type="function">
    <text evidence="1">Metallothioneins have a high content of cysteine residues that bind various heavy metals.</text>
</comment>
<comment type="domain">
    <text>Class I metallothioneins contain 2 metal-binding domains: four divalent ions are chelated within cluster A of the alpha domain and are coordinated via cysteinyl thiolate bridges to 11 cysteine ligands. Cluster B, the corresponding region within the beta domain, can ligate three divalent ions to 9 cysteines.</text>
</comment>
<comment type="similarity">
    <text evidence="4">Belongs to the metallothionein superfamily. Type 1 family.</text>
</comment>
<keyword id="KW-0002">3D-structure</keyword>
<keyword id="KW-0479">Metal-binding</keyword>
<keyword id="KW-0480">Metal-thiolate cluster</keyword>
<evidence type="ECO:0000250" key="1"/>
<evidence type="ECO:0000250" key="2">
    <source>
        <dbReference type="UniProtKB" id="P02795"/>
    </source>
</evidence>
<evidence type="ECO:0000250" key="3">
    <source>
        <dbReference type="UniProtKB" id="P62339"/>
    </source>
</evidence>
<evidence type="ECO:0000305" key="4"/>
<feature type="chain" id="PRO_0000197294" description="Metallothionein B">
    <location>
        <begin position="1"/>
        <end position="60"/>
    </location>
</feature>
<feature type="region of interest" description="Beta">
    <location>
        <begin position="1"/>
        <end position="28"/>
    </location>
</feature>
<feature type="region of interest" description="Alpha">
    <location>
        <begin position="29"/>
        <end position="60"/>
    </location>
</feature>
<feature type="binding site" evidence="2">
    <location>
        <position position="4"/>
    </location>
    <ligand>
        <name>a divalent metal cation</name>
        <dbReference type="ChEBI" id="CHEBI:60240"/>
        <label>1</label>
        <note>in cluster B</note>
    </ligand>
</feature>
<feature type="binding site" evidence="2">
    <location>
        <position position="6"/>
    </location>
    <ligand>
        <name>a divalent metal cation</name>
        <dbReference type="ChEBI" id="CHEBI:60240"/>
        <label>1</label>
        <note>in cluster B</note>
    </ligand>
</feature>
<feature type="binding site" evidence="2">
    <location>
        <position position="6"/>
    </location>
    <ligand>
        <name>a divalent metal cation</name>
        <dbReference type="ChEBI" id="CHEBI:60240"/>
        <label>2</label>
        <note>in cluster B</note>
    </ligand>
</feature>
<feature type="binding site" evidence="2">
    <location>
        <position position="12"/>
    </location>
    <ligand>
        <name>a divalent metal cation</name>
        <dbReference type="ChEBI" id="CHEBI:60240"/>
        <label>2</label>
        <note>in cluster B</note>
    </ligand>
</feature>
<feature type="binding site" evidence="2">
    <location>
        <position position="14"/>
    </location>
    <ligand>
        <name>a divalent metal cation</name>
        <dbReference type="ChEBI" id="CHEBI:60240"/>
        <label>2</label>
        <note>in cluster B</note>
    </ligand>
</feature>
<feature type="binding site" evidence="2">
    <location>
        <position position="14"/>
    </location>
    <ligand>
        <name>a divalent metal cation</name>
        <dbReference type="ChEBI" id="CHEBI:60240"/>
        <label>3</label>
        <note>in cluster B</note>
    </ligand>
</feature>
<feature type="binding site" evidence="2">
    <location>
        <position position="18"/>
    </location>
    <ligand>
        <name>a divalent metal cation</name>
        <dbReference type="ChEBI" id="CHEBI:60240"/>
        <label>3</label>
        <note>in cluster B</note>
    </ligand>
</feature>
<feature type="binding site" evidence="2">
    <location>
        <position position="20"/>
    </location>
    <ligand>
        <name>a divalent metal cation</name>
        <dbReference type="ChEBI" id="CHEBI:60240"/>
        <label>1</label>
        <note>in cluster B</note>
    </ligand>
</feature>
<feature type="binding site" evidence="2">
    <location>
        <position position="23"/>
    </location>
    <ligand>
        <name>a divalent metal cation</name>
        <dbReference type="ChEBI" id="CHEBI:60240"/>
        <label>1</label>
        <note>in cluster B</note>
    </ligand>
</feature>
<feature type="binding site" evidence="2">
    <location>
        <position position="23"/>
    </location>
    <ligand>
        <name>a divalent metal cation</name>
        <dbReference type="ChEBI" id="CHEBI:60240"/>
        <label>3</label>
        <note>in cluster B</note>
    </ligand>
</feature>
<feature type="binding site" evidence="2">
    <location>
        <position position="25"/>
    </location>
    <ligand>
        <name>a divalent metal cation</name>
        <dbReference type="ChEBI" id="CHEBI:60240"/>
        <label>2</label>
        <note>in cluster B</note>
    </ligand>
</feature>
<feature type="binding site" evidence="2">
    <location>
        <position position="28"/>
    </location>
    <ligand>
        <name>a divalent metal cation</name>
        <dbReference type="ChEBI" id="CHEBI:60240"/>
        <label>3</label>
        <note>in cluster B</note>
    </ligand>
</feature>
<feature type="binding site" evidence="2">
    <location>
        <position position="32"/>
    </location>
    <ligand>
        <name>a divalent metal cation</name>
        <dbReference type="ChEBI" id="CHEBI:60240"/>
        <label>4</label>
        <note>in cluster A</note>
    </ligand>
</feature>
<feature type="binding site" evidence="2">
    <location>
        <position position="33"/>
    </location>
    <ligand>
        <name>a divalent metal cation</name>
        <dbReference type="ChEBI" id="CHEBI:60240"/>
        <label>4</label>
        <note>in cluster A</note>
    </ligand>
</feature>
<feature type="binding site" evidence="2">
    <location>
        <position position="33"/>
    </location>
    <ligand>
        <name>a divalent metal cation</name>
        <dbReference type="ChEBI" id="CHEBI:60240"/>
        <label>5</label>
        <note>in cluster A</note>
    </ligand>
</feature>
<feature type="binding site" evidence="2">
    <location>
        <position position="35"/>
    </location>
    <ligand>
        <name>a divalent metal cation</name>
        <dbReference type="ChEBI" id="CHEBI:60240"/>
        <label>5</label>
        <note>in cluster A</note>
    </ligand>
</feature>
<feature type="binding site" evidence="2">
    <location>
        <position position="36"/>
    </location>
    <ligand>
        <name>a divalent metal cation</name>
        <dbReference type="ChEBI" id="CHEBI:60240"/>
        <label>5</label>
        <note>in cluster A</note>
    </ligand>
</feature>
<feature type="binding site" evidence="2">
    <location>
        <position position="36"/>
    </location>
    <ligand>
        <name>a divalent metal cation</name>
        <dbReference type="ChEBI" id="CHEBI:60240"/>
        <label>6</label>
        <note>in cluster A</note>
    </ligand>
</feature>
<feature type="binding site" evidence="2">
    <location>
        <position position="40"/>
    </location>
    <ligand>
        <name>a divalent metal cation</name>
        <dbReference type="ChEBI" id="CHEBI:60240"/>
        <label>6</label>
        <note>in cluster A</note>
    </ligand>
</feature>
<feature type="binding site" evidence="2">
    <location>
        <position position="43"/>
    </location>
    <ligand>
        <name>a divalent metal cation</name>
        <dbReference type="ChEBI" id="CHEBI:60240"/>
        <label>4</label>
        <note>in cluster A</note>
    </ligand>
</feature>
<feature type="binding site" evidence="2">
    <location>
        <position position="43"/>
    </location>
    <ligand>
        <name>a divalent metal cation</name>
        <dbReference type="ChEBI" id="CHEBI:60240"/>
        <label>6</label>
        <note>in cluster A</note>
    </ligand>
</feature>
<feature type="binding site" evidence="2">
    <location>
        <position position="47"/>
    </location>
    <ligand>
        <name>a divalent metal cation</name>
        <dbReference type="ChEBI" id="CHEBI:60240"/>
        <label>4</label>
        <note>in cluster A</note>
    </ligand>
</feature>
<feature type="binding site" evidence="2">
    <location>
        <position position="49"/>
    </location>
    <ligand>
        <name>a divalent metal cation</name>
        <dbReference type="ChEBI" id="CHEBI:60240"/>
        <label>5</label>
        <note>in cluster A</note>
    </ligand>
</feature>
<feature type="binding site" evidence="2">
    <location>
        <position position="49"/>
    </location>
    <ligand>
        <name>a divalent metal cation</name>
        <dbReference type="ChEBI" id="CHEBI:60240"/>
        <label>7</label>
        <note>in cluster A</note>
    </ligand>
</feature>
<feature type="binding site" evidence="3">
    <location>
        <position position="54"/>
    </location>
    <ligand>
        <name>a divalent metal cation</name>
        <dbReference type="ChEBI" id="CHEBI:60240"/>
        <label>7</label>
        <note>in cluster A</note>
    </ligand>
</feature>
<feature type="binding site" evidence="2">
    <location>
        <position position="58"/>
    </location>
    <ligand>
        <name>a divalent metal cation</name>
        <dbReference type="ChEBI" id="CHEBI:60240"/>
        <label>7</label>
        <note>in cluster A</note>
    </ligand>
</feature>
<feature type="binding site" evidence="2">
    <location>
        <position position="59"/>
    </location>
    <ligand>
        <name>a divalent metal cation</name>
        <dbReference type="ChEBI" id="CHEBI:60240"/>
        <label>6</label>
        <note>in cluster A</note>
    </ligand>
</feature>
<feature type="binding site" evidence="2">
    <location>
        <position position="59"/>
    </location>
    <ligand>
        <name>a divalent metal cation</name>
        <dbReference type="ChEBI" id="CHEBI:60240"/>
        <label>7</label>
        <note>in cluster A</note>
    </ligand>
</feature>
<dbReference type="EMBL" id="AJ006485">
    <property type="protein sequence ID" value="CAA07064.1"/>
    <property type="molecule type" value="mRNA"/>
</dbReference>
<dbReference type="PDB" id="1M0G">
    <property type="method" value="NMR"/>
    <property type="chains" value="A=31-60"/>
</dbReference>
<dbReference type="PDBsum" id="1M0G"/>
<dbReference type="SMR" id="P62680"/>
<dbReference type="GO" id="GO:0046872">
    <property type="term" value="F:metal ion binding"/>
    <property type="evidence" value="ECO:0007669"/>
    <property type="project" value="UniProtKB-KW"/>
</dbReference>
<dbReference type="FunFam" id="4.10.10.10:FF:000001">
    <property type="entry name" value="Metallothionein"/>
    <property type="match status" value="1"/>
</dbReference>
<dbReference type="Gene3D" id="4.10.10.10">
    <property type="entry name" value="Metallothionein Isoform II"/>
    <property type="match status" value="1"/>
</dbReference>
<dbReference type="InterPro" id="IPR017854">
    <property type="entry name" value="Metalthion_dom_sf"/>
</dbReference>
<dbReference type="InterPro" id="IPR023587">
    <property type="entry name" value="Metalthion_dom_sf_vert"/>
</dbReference>
<dbReference type="InterPro" id="IPR000006">
    <property type="entry name" value="Metalthion_vert"/>
</dbReference>
<dbReference type="InterPro" id="IPR018064">
    <property type="entry name" value="Metalthion_vert_metal_BS"/>
</dbReference>
<dbReference type="PANTHER" id="PTHR23299">
    <property type="entry name" value="METALLOTHIONEIN"/>
    <property type="match status" value="1"/>
</dbReference>
<dbReference type="PANTHER" id="PTHR23299:SF24">
    <property type="entry name" value="METALLOTHIONEIN-1X"/>
    <property type="match status" value="1"/>
</dbReference>
<dbReference type="Pfam" id="PF00131">
    <property type="entry name" value="Metallothio"/>
    <property type="match status" value="1"/>
</dbReference>
<dbReference type="PRINTS" id="PR00860">
    <property type="entry name" value="MTVERTEBRATE"/>
</dbReference>
<dbReference type="SUPFAM" id="SSF57868">
    <property type="entry name" value="Metallothionein"/>
    <property type="match status" value="1"/>
</dbReference>
<dbReference type="PROSITE" id="PS00203">
    <property type="entry name" value="METALLOTHIONEIN_VRT"/>
    <property type="match status" value="1"/>
</dbReference>
<organism>
    <name type="scientific">Notothenia neglecta</name>
    <name type="common">Yellowbelly rockcod</name>
    <name type="synonym">Notothenia coriiceps neglecta</name>
    <dbReference type="NCBI Taxonomy" id="202063"/>
    <lineage>
        <taxon>Eukaryota</taxon>
        <taxon>Metazoa</taxon>
        <taxon>Chordata</taxon>
        <taxon>Craniata</taxon>
        <taxon>Vertebrata</taxon>
        <taxon>Euteleostomi</taxon>
        <taxon>Actinopterygii</taxon>
        <taxon>Neopterygii</taxon>
        <taxon>Teleostei</taxon>
        <taxon>Neoteleostei</taxon>
        <taxon>Acanthomorphata</taxon>
        <taxon>Eupercaria</taxon>
        <taxon>Perciformes</taxon>
        <taxon>Notothenioidei</taxon>
        <taxon>Nototheniidae</taxon>
        <taxon>Notothenia</taxon>
    </lineage>
</organism>
<reference key="1">
    <citation type="journal article" date="1999" name="Mol. Biol. Evol.">
        <title>Metallothioneins in antarctic fish: evidence for independent duplication and gene conversion.</title>
        <authorList>
            <person name="Bargelloni L."/>
            <person name="Scudiero R."/>
            <person name="Parisi E."/>
            <person name="Carginale V."/>
            <person name="Capasso C."/>
            <person name="Patarnello T."/>
        </authorList>
    </citation>
    <scope>NUCLEOTIDE SEQUENCE [MRNA]</scope>
    <source>
        <tissue>Liver</tissue>
    </source>
</reference>
<proteinExistence type="evidence at protein level"/>
<accession>P62680</accession>
<accession>Q92145</accession>
<protein>
    <recommendedName>
        <fullName>Metallothionein B</fullName>
        <shortName>MT-B</shortName>
        <shortName>MT-II</shortName>
    </recommendedName>
</protein>
<gene>
    <name type="primary">mtb</name>
</gene>
<name>MTB_NOTNE</name>